<organism>
    <name type="scientific">Staphylococcus epidermidis (strain ATCC 35984 / DSM 28319 / BCRC 17069 / CCUG 31568 / BM 3577 / RP62A)</name>
    <dbReference type="NCBI Taxonomy" id="176279"/>
    <lineage>
        <taxon>Bacteria</taxon>
        <taxon>Bacillati</taxon>
        <taxon>Bacillota</taxon>
        <taxon>Bacilli</taxon>
        <taxon>Bacillales</taxon>
        <taxon>Staphylococcaceae</taxon>
        <taxon>Staphylococcus</taxon>
    </lineage>
</organism>
<name>DTD_STAEQ</name>
<evidence type="ECO:0000255" key="1">
    <source>
        <dbReference type="HAMAP-Rule" id="MF_00518"/>
    </source>
</evidence>
<keyword id="KW-0963">Cytoplasm</keyword>
<keyword id="KW-0378">Hydrolase</keyword>
<keyword id="KW-1185">Reference proteome</keyword>
<keyword id="KW-0694">RNA-binding</keyword>
<keyword id="KW-0820">tRNA-binding</keyword>
<feature type="chain" id="PRO_0000164593" description="D-aminoacyl-tRNA deacylase">
    <location>
        <begin position="1"/>
        <end position="150"/>
    </location>
</feature>
<feature type="short sequence motif" description="Gly-cisPro motif, important for rejection of L-amino acids" evidence="1">
    <location>
        <begin position="136"/>
        <end position="137"/>
    </location>
</feature>
<comment type="function">
    <text evidence="1">An aminoacyl-tRNA editing enzyme that deacylates mischarged D-aminoacyl-tRNAs. Also deacylates mischarged glycyl-tRNA(Ala), protecting cells against glycine mischarging by AlaRS. Acts via tRNA-based rather than protein-based catalysis; rejects L-amino acids rather than detecting D-amino acids in the active site. By recycling D-aminoacyl-tRNA to D-amino acids and free tRNA molecules, this enzyme counteracts the toxicity associated with the formation of D-aminoacyl-tRNA entities in vivo and helps enforce protein L-homochirality.</text>
</comment>
<comment type="catalytic activity">
    <reaction evidence="1">
        <text>glycyl-tRNA(Ala) + H2O = tRNA(Ala) + glycine + H(+)</text>
        <dbReference type="Rhea" id="RHEA:53744"/>
        <dbReference type="Rhea" id="RHEA-COMP:9657"/>
        <dbReference type="Rhea" id="RHEA-COMP:13640"/>
        <dbReference type="ChEBI" id="CHEBI:15377"/>
        <dbReference type="ChEBI" id="CHEBI:15378"/>
        <dbReference type="ChEBI" id="CHEBI:57305"/>
        <dbReference type="ChEBI" id="CHEBI:78442"/>
        <dbReference type="ChEBI" id="CHEBI:78522"/>
        <dbReference type="EC" id="3.1.1.96"/>
    </reaction>
</comment>
<comment type="catalytic activity">
    <reaction evidence="1">
        <text>a D-aminoacyl-tRNA + H2O = a tRNA + a D-alpha-amino acid + H(+)</text>
        <dbReference type="Rhea" id="RHEA:13953"/>
        <dbReference type="Rhea" id="RHEA-COMP:10123"/>
        <dbReference type="Rhea" id="RHEA-COMP:10124"/>
        <dbReference type="ChEBI" id="CHEBI:15377"/>
        <dbReference type="ChEBI" id="CHEBI:15378"/>
        <dbReference type="ChEBI" id="CHEBI:59871"/>
        <dbReference type="ChEBI" id="CHEBI:78442"/>
        <dbReference type="ChEBI" id="CHEBI:79333"/>
        <dbReference type="EC" id="3.1.1.96"/>
    </reaction>
</comment>
<comment type="subunit">
    <text evidence="1">Homodimer.</text>
</comment>
<comment type="subcellular location">
    <subcellularLocation>
        <location evidence="1">Cytoplasm</location>
    </subcellularLocation>
</comment>
<comment type="domain">
    <text evidence="1">A Gly-cisPro motif from one monomer fits into the active site of the other monomer to allow specific chiral rejection of L-amino acids.</text>
</comment>
<comment type="similarity">
    <text evidence="1">Belongs to the DTD family.</text>
</comment>
<proteinExistence type="inferred from homology"/>
<accession>Q5HNR9</accession>
<gene>
    <name evidence="1" type="primary">dtd</name>
    <name type="ordered locus">SERP1195</name>
</gene>
<sequence>MKIIVQRVKNARVTNDTIDNQINKGYCLLVGVGQNSTEEDVKVIARKIAHARLFEDENDKLNLNIQQVEGEILSVSQFTIYADVKKGNRPGFSNSKAPEQAKDLYQKFNKELEGYGLIVKTGEFGTHMNVEINNDGPVTLIYESQDGKII</sequence>
<protein>
    <recommendedName>
        <fullName evidence="1">D-aminoacyl-tRNA deacylase</fullName>
        <shortName evidence="1">DTD</shortName>
        <ecNumber evidence="1">3.1.1.96</ecNumber>
    </recommendedName>
    <alternativeName>
        <fullName evidence="1">Gly-tRNA(Ala) deacylase</fullName>
    </alternativeName>
</protein>
<dbReference type="EC" id="3.1.1.96" evidence="1"/>
<dbReference type="EMBL" id="CP000029">
    <property type="protein sequence ID" value="AAW54574.1"/>
    <property type="molecule type" value="Genomic_DNA"/>
</dbReference>
<dbReference type="RefSeq" id="WP_001830766.1">
    <property type="nucleotide sequence ID" value="NC_002976.3"/>
</dbReference>
<dbReference type="SMR" id="Q5HNR9"/>
<dbReference type="STRING" id="176279.SERP1195"/>
<dbReference type="GeneID" id="50018569"/>
<dbReference type="KEGG" id="ser:SERP1195"/>
<dbReference type="eggNOG" id="COG1490">
    <property type="taxonomic scope" value="Bacteria"/>
</dbReference>
<dbReference type="HOGENOM" id="CLU_076901_1_0_9"/>
<dbReference type="Proteomes" id="UP000000531">
    <property type="component" value="Chromosome"/>
</dbReference>
<dbReference type="GO" id="GO:0005737">
    <property type="term" value="C:cytoplasm"/>
    <property type="evidence" value="ECO:0007669"/>
    <property type="project" value="UniProtKB-SubCell"/>
</dbReference>
<dbReference type="GO" id="GO:0051500">
    <property type="term" value="F:D-tyrosyl-tRNA(Tyr) deacylase activity"/>
    <property type="evidence" value="ECO:0007669"/>
    <property type="project" value="TreeGrafter"/>
</dbReference>
<dbReference type="GO" id="GO:0106026">
    <property type="term" value="F:Gly-tRNA(Ala) deacylase activity"/>
    <property type="evidence" value="ECO:0007669"/>
    <property type="project" value="UniProtKB-UniRule"/>
</dbReference>
<dbReference type="GO" id="GO:0043908">
    <property type="term" value="F:Ser(Gly)-tRNA(Ala) hydrolase activity"/>
    <property type="evidence" value="ECO:0007669"/>
    <property type="project" value="UniProtKB-UniRule"/>
</dbReference>
<dbReference type="GO" id="GO:0000049">
    <property type="term" value="F:tRNA binding"/>
    <property type="evidence" value="ECO:0007669"/>
    <property type="project" value="UniProtKB-UniRule"/>
</dbReference>
<dbReference type="GO" id="GO:0019478">
    <property type="term" value="P:D-amino acid catabolic process"/>
    <property type="evidence" value="ECO:0007669"/>
    <property type="project" value="UniProtKB-UniRule"/>
</dbReference>
<dbReference type="FunFam" id="3.50.80.10:FF:000001">
    <property type="entry name" value="D-aminoacyl-tRNA deacylase"/>
    <property type="match status" value="1"/>
</dbReference>
<dbReference type="Gene3D" id="3.50.80.10">
    <property type="entry name" value="D-tyrosyl-tRNA(Tyr) deacylase"/>
    <property type="match status" value="1"/>
</dbReference>
<dbReference type="HAMAP" id="MF_00518">
    <property type="entry name" value="Deacylase_Dtd"/>
    <property type="match status" value="1"/>
</dbReference>
<dbReference type="InterPro" id="IPR003732">
    <property type="entry name" value="Daa-tRNA_deacyls_DTD"/>
</dbReference>
<dbReference type="InterPro" id="IPR023509">
    <property type="entry name" value="DTD-like_sf"/>
</dbReference>
<dbReference type="NCBIfam" id="TIGR00256">
    <property type="entry name" value="D-aminoacyl-tRNA deacylase"/>
    <property type="match status" value="1"/>
</dbReference>
<dbReference type="PANTHER" id="PTHR10472:SF5">
    <property type="entry name" value="D-AMINOACYL-TRNA DEACYLASE 1"/>
    <property type="match status" value="1"/>
</dbReference>
<dbReference type="PANTHER" id="PTHR10472">
    <property type="entry name" value="D-TYROSYL-TRNA TYR DEACYLASE"/>
    <property type="match status" value="1"/>
</dbReference>
<dbReference type="Pfam" id="PF02580">
    <property type="entry name" value="Tyr_Deacylase"/>
    <property type="match status" value="1"/>
</dbReference>
<dbReference type="SUPFAM" id="SSF69500">
    <property type="entry name" value="DTD-like"/>
    <property type="match status" value="1"/>
</dbReference>
<reference key="1">
    <citation type="journal article" date="2005" name="J. Bacteriol.">
        <title>Insights on evolution of virulence and resistance from the complete genome analysis of an early methicillin-resistant Staphylococcus aureus strain and a biofilm-producing methicillin-resistant Staphylococcus epidermidis strain.</title>
        <authorList>
            <person name="Gill S.R."/>
            <person name="Fouts D.E."/>
            <person name="Archer G.L."/>
            <person name="Mongodin E.F."/>
            <person name="DeBoy R.T."/>
            <person name="Ravel J."/>
            <person name="Paulsen I.T."/>
            <person name="Kolonay J.F."/>
            <person name="Brinkac L.M."/>
            <person name="Beanan M.J."/>
            <person name="Dodson R.J."/>
            <person name="Daugherty S.C."/>
            <person name="Madupu R."/>
            <person name="Angiuoli S.V."/>
            <person name="Durkin A.S."/>
            <person name="Haft D.H."/>
            <person name="Vamathevan J.J."/>
            <person name="Khouri H."/>
            <person name="Utterback T.R."/>
            <person name="Lee C."/>
            <person name="Dimitrov G."/>
            <person name="Jiang L."/>
            <person name="Qin H."/>
            <person name="Weidman J."/>
            <person name="Tran K."/>
            <person name="Kang K.H."/>
            <person name="Hance I.R."/>
            <person name="Nelson K.E."/>
            <person name="Fraser C.M."/>
        </authorList>
    </citation>
    <scope>NUCLEOTIDE SEQUENCE [LARGE SCALE GENOMIC DNA]</scope>
    <source>
        <strain>ATCC 35984 / DSM 28319 / BCRC 17069 / CCUG 31568 / BM 3577 / RP62A</strain>
    </source>
</reference>